<gene>
    <name evidence="1" type="primary">nusB</name>
    <name type="ordered locus">BLi02603</name>
    <name type="ordered locus">BL01528</name>
</gene>
<protein>
    <recommendedName>
        <fullName evidence="1">Transcription antitermination protein NusB</fullName>
    </recommendedName>
    <alternativeName>
        <fullName evidence="1">Antitermination factor NusB</fullName>
    </alternativeName>
</protein>
<organism>
    <name type="scientific">Bacillus licheniformis (strain ATCC 14580 / DSM 13 / JCM 2505 / CCUG 7422 / NBRC 12200 / NCIMB 9375 / NCTC 10341 / NRRL NRS-1264 / Gibson 46)</name>
    <dbReference type="NCBI Taxonomy" id="279010"/>
    <lineage>
        <taxon>Bacteria</taxon>
        <taxon>Bacillati</taxon>
        <taxon>Bacillota</taxon>
        <taxon>Bacilli</taxon>
        <taxon>Bacillales</taxon>
        <taxon>Bacillaceae</taxon>
        <taxon>Bacillus</taxon>
    </lineage>
</organism>
<dbReference type="EMBL" id="CP000002">
    <property type="protein sequence ID" value="AAU24118.1"/>
    <property type="molecule type" value="Genomic_DNA"/>
</dbReference>
<dbReference type="EMBL" id="AE017333">
    <property type="protein sequence ID" value="AAU41477.1"/>
    <property type="molecule type" value="Genomic_DNA"/>
</dbReference>
<dbReference type="RefSeq" id="WP_003183384.1">
    <property type="nucleotide sequence ID" value="NC_006322.1"/>
</dbReference>
<dbReference type="SMR" id="Q65HI7"/>
<dbReference type="STRING" id="279010.BL01528"/>
<dbReference type="GeneID" id="92860802"/>
<dbReference type="KEGG" id="bld:BLi02603"/>
<dbReference type="KEGG" id="bli:BL01528"/>
<dbReference type="eggNOG" id="COG0781">
    <property type="taxonomic scope" value="Bacteria"/>
</dbReference>
<dbReference type="HOGENOM" id="CLU_087843_3_3_9"/>
<dbReference type="Proteomes" id="UP000000606">
    <property type="component" value="Chromosome"/>
</dbReference>
<dbReference type="GO" id="GO:0005829">
    <property type="term" value="C:cytosol"/>
    <property type="evidence" value="ECO:0007669"/>
    <property type="project" value="TreeGrafter"/>
</dbReference>
<dbReference type="GO" id="GO:0003723">
    <property type="term" value="F:RNA binding"/>
    <property type="evidence" value="ECO:0007669"/>
    <property type="project" value="UniProtKB-UniRule"/>
</dbReference>
<dbReference type="GO" id="GO:0006353">
    <property type="term" value="P:DNA-templated transcription termination"/>
    <property type="evidence" value="ECO:0007669"/>
    <property type="project" value="UniProtKB-UniRule"/>
</dbReference>
<dbReference type="GO" id="GO:0031564">
    <property type="term" value="P:transcription antitermination"/>
    <property type="evidence" value="ECO:0007669"/>
    <property type="project" value="UniProtKB-KW"/>
</dbReference>
<dbReference type="CDD" id="cd00619">
    <property type="entry name" value="Terminator_NusB"/>
    <property type="match status" value="1"/>
</dbReference>
<dbReference type="FunFam" id="1.10.940.10:FF:000003">
    <property type="entry name" value="Transcription antitermination factor NusB"/>
    <property type="match status" value="1"/>
</dbReference>
<dbReference type="Gene3D" id="1.10.940.10">
    <property type="entry name" value="NusB-like"/>
    <property type="match status" value="1"/>
</dbReference>
<dbReference type="HAMAP" id="MF_00073">
    <property type="entry name" value="NusB"/>
    <property type="match status" value="1"/>
</dbReference>
<dbReference type="InterPro" id="IPR035926">
    <property type="entry name" value="NusB-like_sf"/>
</dbReference>
<dbReference type="InterPro" id="IPR011605">
    <property type="entry name" value="NusB_fam"/>
</dbReference>
<dbReference type="InterPro" id="IPR006027">
    <property type="entry name" value="NusB_RsmB_TIM44"/>
</dbReference>
<dbReference type="NCBIfam" id="TIGR01951">
    <property type="entry name" value="nusB"/>
    <property type="match status" value="1"/>
</dbReference>
<dbReference type="PANTHER" id="PTHR11078:SF3">
    <property type="entry name" value="ANTITERMINATION NUSB DOMAIN-CONTAINING PROTEIN"/>
    <property type="match status" value="1"/>
</dbReference>
<dbReference type="PANTHER" id="PTHR11078">
    <property type="entry name" value="N UTILIZATION SUBSTANCE PROTEIN B-RELATED"/>
    <property type="match status" value="1"/>
</dbReference>
<dbReference type="Pfam" id="PF01029">
    <property type="entry name" value="NusB"/>
    <property type="match status" value="1"/>
</dbReference>
<dbReference type="SUPFAM" id="SSF48013">
    <property type="entry name" value="NusB-like"/>
    <property type="match status" value="1"/>
</dbReference>
<name>NUSB_BACLD</name>
<accession>Q65HI7</accession>
<accession>Q62SZ1</accession>
<feature type="chain" id="PRO_0000265484" description="Transcription antitermination protein NusB">
    <location>
        <begin position="1"/>
        <end position="129"/>
    </location>
</feature>
<proteinExistence type="inferred from homology"/>
<keyword id="KW-1185">Reference proteome</keyword>
<keyword id="KW-0694">RNA-binding</keyword>
<keyword id="KW-0804">Transcription</keyword>
<keyword id="KW-0889">Transcription antitermination</keyword>
<keyword id="KW-0805">Transcription regulation</keyword>
<comment type="function">
    <text evidence="1">Involved in transcription antitermination. Required for transcription of ribosomal RNA (rRNA) genes. Binds specifically to the boxA antiterminator sequence of the ribosomal RNA (rrn) operons.</text>
</comment>
<comment type="similarity">
    <text evidence="1">Belongs to the NusB family.</text>
</comment>
<reference key="1">
    <citation type="journal article" date="2004" name="J. Mol. Microbiol. Biotechnol.">
        <title>The complete genome sequence of Bacillus licheniformis DSM13, an organism with great industrial potential.</title>
        <authorList>
            <person name="Veith B."/>
            <person name="Herzberg C."/>
            <person name="Steckel S."/>
            <person name="Feesche J."/>
            <person name="Maurer K.H."/>
            <person name="Ehrenreich P."/>
            <person name="Baeumer S."/>
            <person name="Henne A."/>
            <person name="Liesegang H."/>
            <person name="Merkl R."/>
            <person name="Ehrenreich A."/>
            <person name="Gottschalk G."/>
        </authorList>
    </citation>
    <scope>NUCLEOTIDE SEQUENCE [LARGE SCALE GENOMIC DNA]</scope>
    <source>
        <strain>ATCC 14580 / DSM 13 / JCM 2505 / CCUG 7422 / NBRC 12200 / NCIMB 9375 / NCTC 10341 / NRRL NRS-1264 / Gibson 46</strain>
    </source>
</reference>
<reference key="2">
    <citation type="journal article" date="2004" name="Genome Biol.">
        <title>Complete genome sequence of the industrial bacterium Bacillus licheniformis and comparisons with closely related Bacillus species.</title>
        <authorList>
            <person name="Rey M.W."/>
            <person name="Ramaiya P."/>
            <person name="Nelson B.A."/>
            <person name="Brody-Karpin S.D."/>
            <person name="Zaretsky E.J."/>
            <person name="Tang M."/>
            <person name="Lopez de Leon A."/>
            <person name="Xiang H."/>
            <person name="Gusti V."/>
            <person name="Clausen I.G."/>
            <person name="Olsen P.B."/>
            <person name="Rasmussen M.D."/>
            <person name="Andersen J.T."/>
            <person name="Joergensen P.L."/>
            <person name="Larsen T.S."/>
            <person name="Sorokin A."/>
            <person name="Bolotin A."/>
            <person name="Lapidus A."/>
            <person name="Galleron N."/>
            <person name="Ehrlich S.D."/>
            <person name="Berka R.M."/>
        </authorList>
    </citation>
    <scope>NUCLEOTIDE SEQUENCE [LARGE SCALE GENOMIC DNA]</scope>
    <source>
        <strain>ATCC 14580 / DSM 13 / JCM 2505 / CCUG 7422 / NBRC 12200 / NCIMB 9375 / NCTC 10341 / NRRL NRS-1264 / Gibson 46</strain>
    </source>
</reference>
<sequence>MKRRTAREKALQSLFQIDVSDIEPNEAMQHALDGQESDAFFEQLVYGVLENKEKIDEMIKRHLVNWKLDRLANVDRAILRLSAYEMIFLDDIPVNVSMNEAIELAKQFGDDKSAKFVNGVLSNIKSDLE</sequence>
<evidence type="ECO:0000255" key="1">
    <source>
        <dbReference type="HAMAP-Rule" id="MF_00073"/>
    </source>
</evidence>